<evidence type="ECO:0000255" key="1">
    <source>
        <dbReference type="HAMAP-Rule" id="MF_00145"/>
    </source>
</evidence>
<gene>
    <name evidence="1" type="primary">pgk</name>
    <name type="ordered locus">ACL_1209</name>
</gene>
<feature type="chain" id="PRO_1000076578" description="Phosphoglycerate kinase">
    <location>
        <begin position="1"/>
        <end position="399"/>
    </location>
</feature>
<feature type="binding site" evidence="1">
    <location>
        <begin position="21"/>
        <end position="23"/>
    </location>
    <ligand>
        <name>substrate</name>
    </ligand>
</feature>
<feature type="binding site" evidence="1">
    <location>
        <position position="37"/>
    </location>
    <ligand>
        <name>substrate</name>
    </ligand>
</feature>
<feature type="binding site" evidence="1">
    <location>
        <begin position="60"/>
        <end position="63"/>
    </location>
    <ligand>
        <name>substrate</name>
    </ligand>
</feature>
<feature type="binding site" evidence="1">
    <location>
        <position position="120"/>
    </location>
    <ligand>
        <name>substrate</name>
    </ligand>
</feature>
<feature type="binding site" evidence="1">
    <location>
        <position position="157"/>
    </location>
    <ligand>
        <name>substrate</name>
    </ligand>
</feature>
<feature type="binding site" evidence="1">
    <location>
        <position position="208"/>
    </location>
    <ligand>
        <name>ATP</name>
        <dbReference type="ChEBI" id="CHEBI:30616"/>
    </ligand>
</feature>
<feature type="binding site" evidence="1">
    <location>
        <position position="296"/>
    </location>
    <ligand>
        <name>ATP</name>
        <dbReference type="ChEBI" id="CHEBI:30616"/>
    </ligand>
</feature>
<feature type="binding site" evidence="1">
    <location>
        <position position="327"/>
    </location>
    <ligand>
        <name>ATP</name>
        <dbReference type="ChEBI" id="CHEBI:30616"/>
    </ligand>
</feature>
<feature type="binding site" evidence="1">
    <location>
        <begin position="355"/>
        <end position="358"/>
    </location>
    <ligand>
        <name>ATP</name>
        <dbReference type="ChEBI" id="CHEBI:30616"/>
    </ligand>
</feature>
<organism>
    <name type="scientific">Acholeplasma laidlawii (strain PG-8A)</name>
    <dbReference type="NCBI Taxonomy" id="441768"/>
    <lineage>
        <taxon>Bacteria</taxon>
        <taxon>Bacillati</taxon>
        <taxon>Mycoplasmatota</taxon>
        <taxon>Mollicutes</taxon>
        <taxon>Acholeplasmatales</taxon>
        <taxon>Acholeplasmataceae</taxon>
        <taxon>Acholeplasma</taxon>
    </lineage>
</organism>
<keyword id="KW-0067">ATP-binding</keyword>
<keyword id="KW-0963">Cytoplasm</keyword>
<keyword id="KW-0324">Glycolysis</keyword>
<keyword id="KW-0418">Kinase</keyword>
<keyword id="KW-0547">Nucleotide-binding</keyword>
<keyword id="KW-1185">Reference proteome</keyword>
<keyword id="KW-0808">Transferase</keyword>
<sequence length="399" mass="42767">MAKKTIRDIELKNKSVLMRVDFNVPLNKDGSISDDTRITAALPTIEYAIEKGAKLILFSHLGRIKTAEDKATNSLKPVAARLSELIGRPVVFIPETRGEALEAAVKNLKSGDVLMFENTRFEDLDGNKESKNNPELGKYWASLGDVFVNDAFGTAHRAHASNVGIANNMEVSVAGLLLEKEINFIGGALENPERPFVAILGGAKVSDKIEVIKNLLKVADKVLIGGGMAFTFLKAQGFEVGKSLVELDKLDLAKELLELSKGKIELGFDVVTGKAFDKDTETNVRSFDAIPADEMGLDIGPKTVARFKEIIASAKTVVWNGPQGVFEMEKFANGTLEVTKALADLHGKAITIVGGGDSAAAVAKFGLEDKFSHISTGGGASLEYLEGKVLPGVELVDVI</sequence>
<accession>A9NHH8</accession>
<name>PGK_ACHLI</name>
<proteinExistence type="inferred from homology"/>
<reference key="1">
    <citation type="journal article" date="2011" name="J. Bacteriol.">
        <title>Complete genome and proteome of Acholeplasma laidlawii.</title>
        <authorList>
            <person name="Lazarev V.N."/>
            <person name="Levitskii S.A."/>
            <person name="Basovskii Y.I."/>
            <person name="Chukin M.M."/>
            <person name="Akopian T.A."/>
            <person name="Vereshchagin V.V."/>
            <person name="Kostrjukova E.S."/>
            <person name="Kovaleva G.Y."/>
            <person name="Kazanov M.D."/>
            <person name="Malko D.B."/>
            <person name="Vitreschak A.G."/>
            <person name="Sernova N.V."/>
            <person name="Gelfand M.S."/>
            <person name="Demina I.A."/>
            <person name="Serebryakova M.V."/>
            <person name="Galyamina M.A."/>
            <person name="Vtyurin N.N."/>
            <person name="Rogov S.I."/>
            <person name="Alexeev D.G."/>
            <person name="Ladygina V.G."/>
            <person name="Govorun V.M."/>
        </authorList>
    </citation>
    <scope>NUCLEOTIDE SEQUENCE [LARGE SCALE GENOMIC DNA]</scope>
    <source>
        <strain>PG-8A</strain>
    </source>
</reference>
<comment type="catalytic activity">
    <reaction evidence="1">
        <text>(2R)-3-phosphoglycerate + ATP = (2R)-3-phospho-glyceroyl phosphate + ADP</text>
        <dbReference type="Rhea" id="RHEA:14801"/>
        <dbReference type="ChEBI" id="CHEBI:30616"/>
        <dbReference type="ChEBI" id="CHEBI:57604"/>
        <dbReference type="ChEBI" id="CHEBI:58272"/>
        <dbReference type="ChEBI" id="CHEBI:456216"/>
        <dbReference type="EC" id="2.7.2.3"/>
    </reaction>
</comment>
<comment type="pathway">
    <text evidence="1">Carbohydrate degradation; glycolysis; pyruvate from D-glyceraldehyde 3-phosphate: step 2/5.</text>
</comment>
<comment type="subunit">
    <text evidence="1">Monomer.</text>
</comment>
<comment type="subcellular location">
    <subcellularLocation>
        <location evidence="1">Cytoplasm</location>
    </subcellularLocation>
</comment>
<comment type="similarity">
    <text evidence="1">Belongs to the phosphoglycerate kinase family.</text>
</comment>
<dbReference type="EC" id="2.7.2.3" evidence="1"/>
<dbReference type="EMBL" id="CP000896">
    <property type="protein sequence ID" value="ABX81808.1"/>
    <property type="molecule type" value="Genomic_DNA"/>
</dbReference>
<dbReference type="RefSeq" id="WP_012243139.1">
    <property type="nucleotide sequence ID" value="NC_010163.1"/>
</dbReference>
<dbReference type="SMR" id="A9NHH8"/>
<dbReference type="STRING" id="441768.ACL_1209"/>
<dbReference type="GeneID" id="41339348"/>
<dbReference type="KEGG" id="acl:ACL_1209"/>
<dbReference type="eggNOG" id="COG0126">
    <property type="taxonomic scope" value="Bacteria"/>
</dbReference>
<dbReference type="HOGENOM" id="CLU_025427_0_2_14"/>
<dbReference type="OrthoDB" id="9808460at2"/>
<dbReference type="UniPathway" id="UPA00109">
    <property type="reaction ID" value="UER00185"/>
</dbReference>
<dbReference type="Proteomes" id="UP000008558">
    <property type="component" value="Chromosome"/>
</dbReference>
<dbReference type="GO" id="GO:0005829">
    <property type="term" value="C:cytosol"/>
    <property type="evidence" value="ECO:0007669"/>
    <property type="project" value="TreeGrafter"/>
</dbReference>
<dbReference type="GO" id="GO:0043531">
    <property type="term" value="F:ADP binding"/>
    <property type="evidence" value="ECO:0007669"/>
    <property type="project" value="TreeGrafter"/>
</dbReference>
<dbReference type="GO" id="GO:0005524">
    <property type="term" value="F:ATP binding"/>
    <property type="evidence" value="ECO:0007669"/>
    <property type="project" value="UniProtKB-KW"/>
</dbReference>
<dbReference type="GO" id="GO:0004618">
    <property type="term" value="F:phosphoglycerate kinase activity"/>
    <property type="evidence" value="ECO:0007669"/>
    <property type="project" value="UniProtKB-UniRule"/>
</dbReference>
<dbReference type="GO" id="GO:0006094">
    <property type="term" value="P:gluconeogenesis"/>
    <property type="evidence" value="ECO:0007669"/>
    <property type="project" value="TreeGrafter"/>
</dbReference>
<dbReference type="GO" id="GO:0006096">
    <property type="term" value="P:glycolytic process"/>
    <property type="evidence" value="ECO:0007669"/>
    <property type="project" value="UniProtKB-UniRule"/>
</dbReference>
<dbReference type="CDD" id="cd00318">
    <property type="entry name" value="Phosphoglycerate_kinase"/>
    <property type="match status" value="1"/>
</dbReference>
<dbReference type="FunFam" id="3.40.50.1260:FF:000001">
    <property type="entry name" value="Phosphoglycerate kinase"/>
    <property type="match status" value="1"/>
</dbReference>
<dbReference type="FunFam" id="3.40.50.1260:FF:000008">
    <property type="entry name" value="Phosphoglycerate kinase"/>
    <property type="match status" value="1"/>
</dbReference>
<dbReference type="Gene3D" id="3.40.50.1260">
    <property type="entry name" value="Phosphoglycerate kinase, N-terminal domain"/>
    <property type="match status" value="2"/>
</dbReference>
<dbReference type="HAMAP" id="MF_00145">
    <property type="entry name" value="Phosphoglyc_kinase"/>
    <property type="match status" value="1"/>
</dbReference>
<dbReference type="InterPro" id="IPR001576">
    <property type="entry name" value="Phosphoglycerate_kinase"/>
</dbReference>
<dbReference type="InterPro" id="IPR015824">
    <property type="entry name" value="Phosphoglycerate_kinase_N"/>
</dbReference>
<dbReference type="InterPro" id="IPR036043">
    <property type="entry name" value="Phosphoglycerate_kinase_sf"/>
</dbReference>
<dbReference type="PANTHER" id="PTHR11406">
    <property type="entry name" value="PHOSPHOGLYCERATE KINASE"/>
    <property type="match status" value="1"/>
</dbReference>
<dbReference type="PANTHER" id="PTHR11406:SF23">
    <property type="entry name" value="PHOSPHOGLYCERATE KINASE 1, CHLOROPLASTIC-RELATED"/>
    <property type="match status" value="1"/>
</dbReference>
<dbReference type="Pfam" id="PF00162">
    <property type="entry name" value="PGK"/>
    <property type="match status" value="1"/>
</dbReference>
<dbReference type="PIRSF" id="PIRSF000724">
    <property type="entry name" value="Pgk"/>
    <property type="match status" value="1"/>
</dbReference>
<dbReference type="PRINTS" id="PR00477">
    <property type="entry name" value="PHGLYCKINASE"/>
</dbReference>
<dbReference type="SUPFAM" id="SSF53748">
    <property type="entry name" value="Phosphoglycerate kinase"/>
    <property type="match status" value="1"/>
</dbReference>
<protein>
    <recommendedName>
        <fullName evidence="1">Phosphoglycerate kinase</fullName>
        <ecNumber evidence="1">2.7.2.3</ecNumber>
    </recommendedName>
</protein>